<gene>
    <name evidence="4 6" type="primary">SCD1</name>
</gene>
<reference evidence="6" key="1">
    <citation type="journal article" date="2015" name="Gene">
        <title>Three unsaturated fatty acid biosynthesis-related genes in yellow catfish Pelteobagrus fulvidraco: Molecular characterization, tissue expression and transcriptional regulation by leptin.</title>
        <authorList>
            <person name="Song Y.F."/>
            <person name="Luo Z."/>
            <person name="Pan Y.X."/>
            <person name="Zhang L.H."/>
            <person name="Chen Q.L."/>
            <person name="Zheng J.L."/>
        </authorList>
    </citation>
    <scope>NUCLEOTIDE SEQUENCE [MRNA]</scope>
    <scope>TISSUE SPECIFICITY</scope>
    <scope>INDUCTION</scope>
    <scope>PHYLOGENETIC ANALYSIS</scope>
    <source>
        <tissue evidence="4">Liver</tissue>
    </source>
</reference>
<keyword id="KW-0256">Endoplasmic reticulum</keyword>
<keyword id="KW-0275">Fatty acid biosynthesis</keyword>
<keyword id="KW-0276">Fatty acid metabolism</keyword>
<keyword id="KW-0408">Iron</keyword>
<keyword id="KW-0444">Lipid biosynthesis</keyword>
<keyword id="KW-0443">Lipid metabolism</keyword>
<keyword id="KW-0472">Membrane</keyword>
<keyword id="KW-0479">Metal-binding</keyword>
<keyword id="KW-0560">Oxidoreductase</keyword>
<keyword id="KW-0812">Transmembrane</keyword>
<keyword id="KW-1133">Transmembrane helix</keyword>
<feature type="chain" id="PRO_0000441396" description="Acyl-CoA desaturase 1">
    <location>
        <begin position="1"/>
        <end position="331"/>
    </location>
</feature>
<feature type="topological domain" description="Cytoplasmic" evidence="1">
    <location>
        <begin position="1"/>
        <end position="46"/>
    </location>
</feature>
<feature type="transmembrane region" description="Helical" evidence="1">
    <location>
        <begin position="47"/>
        <end position="67"/>
    </location>
</feature>
<feature type="topological domain" description="Lumenal" evidence="1">
    <location>
        <begin position="68"/>
        <end position="71"/>
    </location>
</feature>
<feature type="transmembrane region" description="Helical" evidence="1">
    <location>
        <begin position="72"/>
        <end position="90"/>
    </location>
</feature>
<feature type="topological domain" description="Cytoplasmic" evidence="1">
    <location>
        <begin position="91"/>
        <end position="189"/>
    </location>
</feature>
<feature type="transmembrane region" description="Helical" evidence="1">
    <location>
        <begin position="190"/>
        <end position="209"/>
    </location>
</feature>
<feature type="topological domain" description="Lumenal" evidence="1">
    <location>
        <begin position="210"/>
        <end position="213"/>
    </location>
</feature>
<feature type="transmembrane region" description="Helical" evidence="1">
    <location>
        <begin position="214"/>
        <end position="235"/>
    </location>
</feature>
<feature type="topological domain" description="Cytoplasmic" evidence="1">
    <location>
        <begin position="236"/>
        <end position="331"/>
    </location>
</feature>
<feature type="short sequence motif" description="Histidine box-1" evidence="1">
    <location>
        <begin position="92"/>
        <end position="97"/>
    </location>
</feature>
<feature type="short sequence motif" description="Histidine box-2" evidence="1">
    <location>
        <begin position="129"/>
        <end position="133"/>
    </location>
</feature>
<feature type="short sequence motif" description="Histidine box-3" evidence="1">
    <location>
        <begin position="270"/>
        <end position="274"/>
    </location>
</feature>
<feature type="binding site" evidence="1">
    <location>
        <position position="49"/>
    </location>
    <ligand>
        <name>substrate</name>
    </ligand>
</feature>
<feature type="binding site" evidence="1">
    <location>
        <position position="92"/>
    </location>
    <ligand>
        <name>Fe cation</name>
        <dbReference type="ChEBI" id="CHEBI:24875"/>
        <label>1</label>
    </ligand>
</feature>
<feature type="binding site" evidence="1">
    <location>
        <position position="97"/>
    </location>
    <ligand>
        <name>Fe cation</name>
        <dbReference type="ChEBI" id="CHEBI:24875"/>
        <label>1</label>
    </ligand>
</feature>
<feature type="binding site" evidence="1">
    <location>
        <position position="120"/>
    </location>
    <ligand>
        <name>substrate</name>
    </ligand>
</feature>
<feature type="binding site" evidence="1">
    <location>
        <position position="127"/>
    </location>
    <ligand>
        <name>substrate</name>
    </ligand>
</feature>
<feature type="binding site" evidence="1">
    <location>
        <position position="128"/>
    </location>
    <ligand>
        <name>substrate</name>
    </ligand>
</feature>
<feature type="binding site" evidence="1">
    <location>
        <position position="129"/>
    </location>
    <ligand>
        <name>Fe cation</name>
        <dbReference type="ChEBI" id="CHEBI:24875"/>
        <label>1</label>
    </ligand>
</feature>
<feature type="binding site" evidence="1">
    <location>
        <position position="132"/>
    </location>
    <ligand>
        <name>Fe cation</name>
        <dbReference type="ChEBI" id="CHEBI:24875"/>
        <label>2</label>
    </ligand>
</feature>
<feature type="binding site" evidence="1">
    <location>
        <position position="133"/>
    </location>
    <ligand>
        <name>Fe cation</name>
        <dbReference type="ChEBI" id="CHEBI:24875"/>
        <label>1</label>
    </ligand>
</feature>
<feature type="binding site" evidence="1">
    <location>
        <position position="161"/>
    </location>
    <ligand>
        <name>substrate</name>
    </ligand>
</feature>
<feature type="binding site" evidence="1">
    <location>
        <position position="234"/>
    </location>
    <ligand>
        <name>substrate</name>
    </ligand>
</feature>
<feature type="binding site" evidence="1">
    <location>
        <position position="241"/>
    </location>
    <ligand>
        <name>Fe cation</name>
        <dbReference type="ChEBI" id="CHEBI:24875"/>
        <label>2</label>
    </ligand>
</feature>
<feature type="binding site" evidence="1">
    <location>
        <position position="270"/>
    </location>
    <ligand>
        <name>Fe cation</name>
        <dbReference type="ChEBI" id="CHEBI:24875"/>
        <label>2</label>
    </ligand>
</feature>
<feature type="binding site" evidence="1">
    <location>
        <position position="273"/>
    </location>
    <ligand>
        <name>Fe cation</name>
        <dbReference type="ChEBI" id="CHEBI:24875"/>
        <label>1</label>
    </ligand>
</feature>
<feature type="binding site" evidence="1">
    <location>
        <position position="274"/>
    </location>
    <ligand>
        <name>Fe cation</name>
        <dbReference type="ChEBI" id="CHEBI:24875"/>
        <label>2</label>
    </ligand>
</feature>
<dbReference type="EC" id="1.14.19.1" evidence="1"/>
<dbReference type="EMBL" id="KJ818303">
    <property type="protein sequence ID" value="AJQ20791.1"/>
    <property type="molecule type" value="mRNA"/>
</dbReference>
<dbReference type="SMR" id="A0A0C5Q309"/>
<dbReference type="GO" id="GO:0005789">
    <property type="term" value="C:endoplasmic reticulum membrane"/>
    <property type="evidence" value="ECO:0007669"/>
    <property type="project" value="UniProtKB-SubCell"/>
</dbReference>
<dbReference type="GO" id="GO:0005506">
    <property type="term" value="F:iron ion binding"/>
    <property type="evidence" value="ECO:0007669"/>
    <property type="project" value="TreeGrafter"/>
</dbReference>
<dbReference type="GO" id="GO:0032896">
    <property type="term" value="F:palmitoyl-CoA 9-desaturase activity"/>
    <property type="evidence" value="ECO:0007669"/>
    <property type="project" value="TreeGrafter"/>
</dbReference>
<dbReference type="GO" id="GO:0004768">
    <property type="term" value="F:stearoyl-CoA 9-desaturase activity"/>
    <property type="evidence" value="ECO:0007669"/>
    <property type="project" value="UniProtKB-EC"/>
</dbReference>
<dbReference type="GO" id="GO:1903966">
    <property type="term" value="P:monounsaturated fatty acid biosynthetic process"/>
    <property type="evidence" value="ECO:0007669"/>
    <property type="project" value="TreeGrafter"/>
</dbReference>
<dbReference type="GO" id="GO:0070542">
    <property type="term" value="P:response to fatty acid"/>
    <property type="evidence" value="ECO:0007669"/>
    <property type="project" value="TreeGrafter"/>
</dbReference>
<dbReference type="GO" id="GO:0006636">
    <property type="term" value="P:unsaturated fatty acid biosynthetic process"/>
    <property type="evidence" value="ECO:0007669"/>
    <property type="project" value="TreeGrafter"/>
</dbReference>
<dbReference type="CDD" id="cd03505">
    <property type="entry name" value="Delta9-FADS-like"/>
    <property type="match status" value="1"/>
</dbReference>
<dbReference type="InterPro" id="IPR015876">
    <property type="entry name" value="Acyl-CoA_DS"/>
</dbReference>
<dbReference type="InterPro" id="IPR005804">
    <property type="entry name" value="FA_desaturase_dom"/>
</dbReference>
<dbReference type="InterPro" id="IPR001522">
    <property type="entry name" value="FADS-1_CS"/>
</dbReference>
<dbReference type="PANTHER" id="PTHR11351">
    <property type="entry name" value="ACYL-COA DESATURASE"/>
    <property type="match status" value="1"/>
</dbReference>
<dbReference type="PANTHER" id="PTHR11351:SF102">
    <property type="entry name" value="STEAROYL-COA DESATURASE"/>
    <property type="match status" value="1"/>
</dbReference>
<dbReference type="Pfam" id="PF00487">
    <property type="entry name" value="FA_desaturase"/>
    <property type="match status" value="1"/>
</dbReference>
<dbReference type="PRINTS" id="PR00075">
    <property type="entry name" value="FACDDSATRASE"/>
</dbReference>
<dbReference type="PROSITE" id="PS00476">
    <property type="entry name" value="FATTY_ACID_DESATUR_1"/>
    <property type="match status" value="1"/>
</dbReference>
<accession>A0A0C5Q309</accession>
<protein>
    <recommendedName>
        <fullName evidence="5">Acyl-CoA desaturase 1</fullName>
        <ecNumber evidence="1">1.14.19.1</ecNumber>
    </recommendedName>
    <alternativeName>
        <fullName evidence="5">Delta(9)-desaturase 1</fullName>
        <shortName evidence="5">Delta-9 desaturase 1</shortName>
    </alternativeName>
    <alternativeName>
        <fullName evidence="5">Fatty acid desaturase 1</fullName>
    </alternativeName>
    <alternativeName>
        <fullName evidence="4 6">Stearoyl-CoA desaturase 1</fullName>
    </alternativeName>
</protein>
<sequence>MTEVDDGCGGRLRGSVLLEDECDLKQECETPTHSLVQGRDPPVVVVWRNVVLMSVLHTAAVYGLVLLPSASAYTLLAFCFVSSALGITAGAHRLWSHRSYKASLPLRIFLAVANSMGFQNDIYEWARDHRVHHKYSETDADPHNASRGFFFAHIGWLLVKKHPKVIENGQKLELSDLKNDRVVMFQRRFYKHSVVVMCFLIPAMLPWFLWAESLWVGYFVPVLLRYALVLNATWLVNSAAHMWGNQPYDVNINPRENRFVTFSAIGEGFHNYHHTFPYDYATSEFGCRLNLTTCFINLMCVLGLAKDCRRVPTELVMARVKRTGDGSHRSG</sequence>
<proteinExistence type="evidence at transcript level"/>
<organism evidence="6">
    <name type="scientific">Tachysurus fulvidraco</name>
    <name type="common">Yellow catfish</name>
    <name type="synonym">Pimelodus fulvidraco</name>
    <dbReference type="NCBI Taxonomy" id="1234273"/>
    <lineage>
        <taxon>Eukaryota</taxon>
        <taxon>Metazoa</taxon>
        <taxon>Chordata</taxon>
        <taxon>Craniata</taxon>
        <taxon>Vertebrata</taxon>
        <taxon>Euteleostomi</taxon>
        <taxon>Actinopterygii</taxon>
        <taxon>Neopterygii</taxon>
        <taxon>Teleostei</taxon>
        <taxon>Ostariophysi</taxon>
        <taxon>Siluriformes</taxon>
        <taxon>Bagridae</taxon>
        <taxon>Tachysurus</taxon>
    </lineage>
</organism>
<comment type="function">
    <text evidence="1">Stearoyl-CoA desaturase that utilizes O(2) and electrons from reduced cytochrome b5 to introduce the first double bond into saturated fatty acyl-CoA substrates. Catalyzes the insertion of a cis double bond at the delta-9 position into fatty acyl-CoA substrates including palmitoyl-CoA and stearoyl-CoA. Contributes to the biosynthesis of membrane phospholipids, cholesterol esters and triglycerides.</text>
</comment>
<comment type="catalytic activity">
    <reaction evidence="1">
        <text>octadecanoyl-CoA + 2 Fe(II)-[cytochrome b5] + O2 + 2 H(+) = (9Z)-octadecenoyl-CoA + 2 Fe(III)-[cytochrome b5] + 2 H2O</text>
        <dbReference type="Rhea" id="RHEA:19721"/>
        <dbReference type="Rhea" id="RHEA-COMP:10438"/>
        <dbReference type="Rhea" id="RHEA-COMP:10439"/>
        <dbReference type="ChEBI" id="CHEBI:15377"/>
        <dbReference type="ChEBI" id="CHEBI:15378"/>
        <dbReference type="ChEBI" id="CHEBI:15379"/>
        <dbReference type="ChEBI" id="CHEBI:29033"/>
        <dbReference type="ChEBI" id="CHEBI:29034"/>
        <dbReference type="ChEBI" id="CHEBI:57387"/>
        <dbReference type="ChEBI" id="CHEBI:57394"/>
        <dbReference type="EC" id="1.14.19.1"/>
    </reaction>
</comment>
<comment type="cofactor">
    <cofactor evidence="2">
        <name>Fe(2+)</name>
        <dbReference type="ChEBI" id="CHEBI:29033"/>
    </cofactor>
    <text evidence="1">Expected to bind 2 Fe(2+) ions per subunit.</text>
</comment>
<comment type="subcellular location">
    <subcellularLocation>
        <location evidence="1">Endoplasmic reticulum membrane</location>
        <topology evidence="1">Multi-pass membrane protein</topology>
    </subcellularLocation>
</comment>
<comment type="tissue specificity">
    <text evidence="3">Expression is highest in liver, followed by brain and intestine, and lowest in spleen. Also expressed in heart, gill and muscle.</text>
</comment>
<comment type="induction">
    <text evidence="3">Expression is transcriptionally down-regulated by intraperitoneal injection of human leptin at 24 hours and 48 hours post-injection.</text>
</comment>
<comment type="domain">
    <text evidence="2">The histidine box domains are involved in binding the catalytic metal ions.</text>
</comment>
<comment type="similarity">
    <text evidence="2 5">Belongs to the fatty acid desaturase type 1 family.</text>
</comment>
<evidence type="ECO:0000250" key="1">
    <source>
        <dbReference type="UniProtKB" id="P13516"/>
    </source>
</evidence>
<evidence type="ECO:0000255" key="2">
    <source>
        <dbReference type="RuleBase" id="RU000581"/>
    </source>
</evidence>
<evidence type="ECO:0000269" key="3">
    <source>
    </source>
</evidence>
<evidence type="ECO:0000303" key="4">
    <source>
    </source>
</evidence>
<evidence type="ECO:0000305" key="5"/>
<evidence type="ECO:0000312" key="6">
    <source>
        <dbReference type="EMBL" id="AJQ20791.1"/>
    </source>
</evidence>
<name>SCD1_TACFU</name>